<reference key="1">
    <citation type="journal article" date="2000" name="Syst. Biol.">
        <title>Phylogenetics of flowering plants based upon a combined analysis of plastid atpB and rbcL gene sequences.</title>
        <authorList>
            <person name="Savolainen V."/>
            <person name="Chase M.W."/>
            <person name="Morton C.M."/>
            <person name="Hoot S.B."/>
            <person name="Soltis D.E."/>
            <person name="Bayer C."/>
            <person name="Fay M.F."/>
            <person name="de Bruijn A."/>
            <person name="Sullivan S."/>
            <person name="Qiu Y.-L."/>
        </authorList>
    </citation>
    <scope>NUCLEOTIDE SEQUENCE [GENOMIC DNA]</scope>
</reference>
<reference key="2">
    <citation type="submission" date="1999-11" db="EMBL/GenBank/DDBJ databases">
        <title>Angiosperm phylogeny inferred from multiple genes as a tool for comparative biology.</title>
        <authorList>
            <person name="Soltis P.S."/>
            <person name="Soltis D.E."/>
            <person name="Chase M.W."/>
        </authorList>
    </citation>
    <scope>NUCLEOTIDE SEQUENCE [GENOMIC DNA]</scope>
</reference>
<comment type="function">
    <text evidence="1">Produces ATP from ADP in the presence of a proton gradient across the membrane. The catalytic sites are hosted primarily by the beta subunits.</text>
</comment>
<comment type="catalytic activity">
    <reaction evidence="1">
        <text>ATP + H2O + 4 H(+)(in) = ADP + phosphate + 5 H(+)(out)</text>
        <dbReference type="Rhea" id="RHEA:57720"/>
        <dbReference type="ChEBI" id="CHEBI:15377"/>
        <dbReference type="ChEBI" id="CHEBI:15378"/>
        <dbReference type="ChEBI" id="CHEBI:30616"/>
        <dbReference type="ChEBI" id="CHEBI:43474"/>
        <dbReference type="ChEBI" id="CHEBI:456216"/>
        <dbReference type="EC" id="7.1.2.2"/>
    </reaction>
</comment>
<comment type="subunit">
    <text evidence="1">F-type ATPases have 2 components, CF(1) - the catalytic core - and CF(0) - the membrane proton channel. CF(1) has five subunits: alpha(3), beta(3), gamma(1), delta(1), epsilon(1). CF(0) has four main subunits: a(1), b(1), b'(1) and c(9-12).</text>
</comment>
<comment type="subcellular location">
    <subcellularLocation>
        <location evidence="1">Plastid</location>
        <location evidence="1">Chloroplast thylakoid membrane</location>
        <topology evidence="1">Peripheral membrane protein</topology>
    </subcellularLocation>
</comment>
<comment type="similarity">
    <text evidence="1">Belongs to the ATPase alpha/beta chains family.</text>
</comment>
<geneLocation type="chloroplast"/>
<evidence type="ECO:0000255" key="1">
    <source>
        <dbReference type="HAMAP-Rule" id="MF_01347"/>
    </source>
</evidence>
<organism>
    <name type="scientific">Myristica fragrans</name>
    <name type="common">Nutmeg</name>
    <dbReference type="NCBI Taxonomy" id="51089"/>
    <lineage>
        <taxon>Eukaryota</taxon>
        <taxon>Viridiplantae</taxon>
        <taxon>Streptophyta</taxon>
        <taxon>Embryophyta</taxon>
        <taxon>Tracheophyta</taxon>
        <taxon>Spermatophyta</taxon>
        <taxon>Magnoliopsida</taxon>
        <taxon>Magnoliidae</taxon>
        <taxon>Magnoliales</taxon>
        <taxon>Myristicaceae</taxon>
        <taxon>Myristica</taxon>
    </lineage>
</organism>
<feature type="chain" id="PRO_0000254497" description="ATP synthase subunit beta, chloroplastic">
    <location>
        <begin position="1"/>
        <end position="498"/>
    </location>
</feature>
<feature type="binding site" evidence="1">
    <location>
        <begin position="172"/>
        <end position="179"/>
    </location>
    <ligand>
        <name>ATP</name>
        <dbReference type="ChEBI" id="CHEBI:30616"/>
    </ligand>
</feature>
<accession>Q9MU30</accession>
<gene>
    <name evidence="1" type="primary">atpB</name>
</gene>
<name>ATPB_MYRFG</name>
<keyword id="KW-0066">ATP synthesis</keyword>
<keyword id="KW-0067">ATP-binding</keyword>
<keyword id="KW-0139">CF(1)</keyword>
<keyword id="KW-0150">Chloroplast</keyword>
<keyword id="KW-0375">Hydrogen ion transport</keyword>
<keyword id="KW-0406">Ion transport</keyword>
<keyword id="KW-0472">Membrane</keyword>
<keyword id="KW-0547">Nucleotide-binding</keyword>
<keyword id="KW-0934">Plastid</keyword>
<keyword id="KW-0793">Thylakoid</keyword>
<keyword id="KW-1278">Translocase</keyword>
<keyword id="KW-0813">Transport</keyword>
<protein>
    <recommendedName>
        <fullName evidence="1">ATP synthase subunit beta, chloroplastic</fullName>
        <ecNumber evidence="1">7.1.2.2</ecNumber>
    </recommendedName>
    <alternativeName>
        <fullName evidence="1">ATP synthase F1 sector subunit beta</fullName>
    </alternativeName>
    <alternativeName>
        <fullName evidence="1">F-ATPase subunit beta</fullName>
    </alternativeName>
</protein>
<proteinExistence type="inferred from homology"/>
<dbReference type="EC" id="7.1.2.2" evidence="1"/>
<dbReference type="EMBL" id="AJ235539">
    <property type="protein sequence ID" value="CAB89717.1"/>
    <property type="molecule type" value="Genomic_DNA"/>
</dbReference>
<dbReference type="EMBL" id="AF209636">
    <property type="protein sequence ID" value="AAK72811.1"/>
    <property type="molecule type" value="Genomic_DNA"/>
</dbReference>
<dbReference type="GO" id="GO:0009535">
    <property type="term" value="C:chloroplast thylakoid membrane"/>
    <property type="evidence" value="ECO:0007669"/>
    <property type="project" value="UniProtKB-SubCell"/>
</dbReference>
<dbReference type="GO" id="GO:0005739">
    <property type="term" value="C:mitochondrion"/>
    <property type="evidence" value="ECO:0007669"/>
    <property type="project" value="GOC"/>
</dbReference>
<dbReference type="GO" id="GO:0045259">
    <property type="term" value="C:proton-transporting ATP synthase complex"/>
    <property type="evidence" value="ECO:0007669"/>
    <property type="project" value="UniProtKB-KW"/>
</dbReference>
<dbReference type="GO" id="GO:0005524">
    <property type="term" value="F:ATP binding"/>
    <property type="evidence" value="ECO:0007669"/>
    <property type="project" value="UniProtKB-UniRule"/>
</dbReference>
<dbReference type="GO" id="GO:0016887">
    <property type="term" value="F:ATP hydrolysis activity"/>
    <property type="evidence" value="ECO:0007669"/>
    <property type="project" value="InterPro"/>
</dbReference>
<dbReference type="GO" id="GO:0046933">
    <property type="term" value="F:proton-transporting ATP synthase activity, rotational mechanism"/>
    <property type="evidence" value="ECO:0007669"/>
    <property type="project" value="UniProtKB-UniRule"/>
</dbReference>
<dbReference type="GO" id="GO:0042776">
    <property type="term" value="P:proton motive force-driven mitochondrial ATP synthesis"/>
    <property type="evidence" value="ECO:0007669"/>
    <property type="project" value="TreeGrafter"/>
</dbReference>
<dbReference type="CDD" id="cd18110">
    <property type="entry name" value="ATP-synt_F1_beta_C"/>
    <property type="match status" value="1"/>
</dbReference>
<dbReference type="CDD" id="cd18115">
    <property type="entry name" value="ATP-synt_F1_beta_N"/>
    <property type="match status" value="1"/>
</dbReference>
<dbReference type="CDD" id="cd01133">
    <property type="entry name" value="F1-ATPase_beta_CD"/>
    <property type="match status" value="1"/>
</dbReference>
<dbReference type="FunFam" id="1.10.1140.10:FF:000001">
    <property type="entry name" value="ATP synthase subunit beta"/>
    <property type="match status" value="1"/>
</dbReference>
<dbReference type="FunFam" id="3.40.50.12240:FF:000006">
    <property type="entry name" value="ATP synthase subunit beta"/>
    <property type="match status" value="1"/>
</dbReference>
<dbReference type="FunFam" id="3.40.50.300:FF:000004">
    <property type="entry name" value="ATP synthase subunit beta"/>
    <property type="match status" value="1"/>
</dbReference>
<dbReference type="FunFam" id="2.40.10.170:FF:000002">
    <property type="entry name" value="ATP synthase subunit beta, chloroplastic"/>
    <property type="match status" value="1"/>
</dbReference>
<dbReference type="Gene3D" id="2.40.10.170">
    <property type="match status" value="1"/>
</dbReference>
<dbReference type="Gene3D" id="1.10.1140.10">
    <property type="entry name" value="Bovine Mitochondrial F1-atpase, Atp Synthase Beta Chain, Chain D, domain 3"/>
    <property type="match status" value="1"/>
</dbReference>
<dbReference type="Gene3D" id="3.40.50.300">
    <property type="entry name" value="P-loop containing nucleotide triphosphate hydrolases"/>
    <property type="match status" value="1"/>
</dbReference>
<dbReference type="HAMAP" id="MF_01347">
    <property type="entry name" value="ATP_synth_beta_bact"/>
    <property type="match status" value="1"/>
</dbReference>
<dbReference type="InterPro" id="IPR003593">
    <property type="entry name" value="AAA+_ATPase"/>
</dbReference>
<dbReference type="InterPro" id="IPR055190">
    <property type="entry name" value="ATP-synt_VA_C"/>
</dbReference>
<dbReference type="InterPro" id="IPR005722">
    <property type="entry name" value="ATP_synth_F1_bsu"/>
</dbReference>
<dbReference type="InterPro" id="IPR020003">
    <property type="entry name" value="ATPase_a/bsu_AS"/>
</dbReference>
<dbReference type="InterPro" id="IPR050053">
    <property type="entry name" value="ATPase_alpha/beta_chains"/>
</dbReference>
<dbReference type="InterPro" id="IPR004100">
    <property type="entry name" value="ATPase_F1/V1/A1_a/bsu_N"/>
</dbReference>
<dbReference type="InterPro" id="IPR036121">
    <property type="entry name" value="ATPase_F1/V1/A1_a/bsu_N_sf"/>
</dbReference>
<dbReference type="InterPro" id="IPR000194">
    <property type="entry name" value="ATPase_F1/V1/A1_a/bsu_nucl-bd"/>
</dbReference>
<dbReference type="InterPro" id="IPR024034">
    <property type="entry name" value="ATPase_F1/V1_b/a_C"/>
</dbReference>
<dbReference type="InterPro" id="IPR027417">
    <property type="entry name" value="P-loop_NTPase"/>
</dbReference>
<dbReference type="NCBIfam" id="TIGR01039">
    <property type="entry name" value="atpD"/>
    <property type="match status" value="1"/>
</dbReference>
<dbReference type="PANTHER" id="PTHR15184">
    <property type="entry name" value="ATP SYNTHASE"/>
    <property type="match status" value="1"/>
</dbReference>
<dbReference type="PANTHER" id="PTHR15184:SF71">
    <property type="entry name" value="ATP SYNTHASE SUBUNIT BETA, MITOCHONDRIAL"/>
    <property type="match status" value="1"/>
</dbReference>
<dbReference type="Pfam" id="PF00006">
    <property type="entry name" value="ATP-synt_ab"/>
    <property type="match status" value="1"/>
</dbReference>
<dbReference type="Pfam" id="PF02874">
    <property type="entry name" value="ATP-synt_ab_N"/>
    <property type="match status" value="1"/>
</dbReference>
<dbReference type="Pfam" id="PF22919">
    <property type="entry name" value="ATP-synt_VA_C"/>
    <property type="match status" value="1"/>
</dbReference>
<dbReference type="SMART" id="SM00382">
    <property type="entry name" value="AAA"/>
    <property type="match status" value="1"/>
</dbReference>
<dbReference type="SUPFAM" id="SSF47917">
    <property type="entry name" value="C-terminal domain of alpha and beta subunits of F1 ATP synthase"/>
    <property type="match status" value="1"/>
</dbReference>
<dbReference type="SUPFAM" id="SSF50615">
    <property type="entry name" value="N-terminal domain of alpha and beta subunits of F1 ATP synthase"/>
    <property type="match status" value="1"/>
</dbReference>
<dbReference type="SUPFAM" id="SSF52540">
    <property type="entry name" value="P-loop containing nucleoside triphosphate hydrolases"/>
    <property type="match status" value="1"/>
</dbReference>
<dbReference type="PROSITE" id="PS00152">
    <property type="entry name" value="ATPASE_ALPHA_BETA"/>
    <property type="match status" value="1"/>
</dbReference>
<sequence>MRINPTTSGPGVSTLEEKNLGSIAQIIGPVLDVAFPPGKMPNIYNALVVKGRDTVGQQINVTCEVQQLLGNNRVRAVAMSATDGLMRGMEVIDTGAPLSVPVGGATLGRIFNVLGEPVDNLGPVDTRTTSPIHRSAPAFIQLDTKLSIFETGIKVVDLLAPYRRGGKIGLFGGAGVGKTVLIMELINNIAKAHGGVSVFGGVGERTREGNDLYMEMKESGVINEQNIAESKVALVYGQMNEPPGARMRVGLTALTMAEYFRDVNEQDVLLFIDNIFRFVQAGSEVSALLGRMPSAVGYQPTLSTEMGSLQERITSTKEGSITSIQAVYVPADDLTDPAPATTFAHLDATTVLSRGLAAKGIYPAVDPLDSTSTMLQPRIVGEEHYETAQRVKQTSQRYKELQDIIAILGLDELSEEDRLTVARARKIERFLSQPFFVAEVFTGSPGKYVGLAETIRGFQLILSGELDGLPEQAFYLVGNIDEATAKAMNLEVESXLKK</sequence>